<proteinExistence type="inferred from homology"/>
<accession>A5VLL0</accession>
<gene>
    <name evidence="2" type="primary">rpsL</name>
    <name type="ordered locus">Lreu_1488</name>
</gene>
<dbReference type="EMBL" id="CP000705">
    <property type="protein sequence ID" value="ABQ83734.1"/>
    <property type="molecule type" value="Genomic_DNA"/>
</dbReference>
<dbReference type="RefSeq" id="WP_003668789.1">
    <property type="nucleotide sequence ID" value="NC_009513.1"/>
</dbReference>
<dbReference type="SMR" id="A5VLL0"/>
<dbReference type="STRING" id="557436.Lreu_1488"/>
<dbReference type="KEGG" id="lre:Lreu_1488"/>
<dbReference type="PATRIC" id="fig|557436.17.peg.135"/>
<dbReference type="eggNOG" id="COG0048">
    <property type="taxonomic scope" value="Bacteria"/>
</dbReference>
<dbReference type="HOGENOM" id="CLU_104295_1_1_9"/>
<dbReference type="Proteomes" id="UP000001991">
    <property type="component" value="Chromosome"/>
</dbReference>
<dbReference type="GO" id="GO:0015935">
    <property type="term" value="C:small ribosomal subunit"/>
    <property type="evidence" value="ECO:0007669"/>
    <property type="project" value="InterPro"/>
</dbReference>
<dbReference type="GO" id="GO:0019843">
    <property type="term" value="F:rRNA binding"/>
    <property type="evidence" value="ECO:0007669"/>
    <property type="project" value="UniProtKB-UniRule"/>
</dbReference>
<dbReference type="GO" id="GO:0003735">
    <property type="term" value="F:structural constituent of ribosome"/>
    <property type="evidence" value="ECO:0007669"/>
    <property type="project" value="InterPro"/>
</dbReference>
<dbReference type="GO" id="GO:0000049">
    <property type="term" value="F:tRNA binding"/>
    <property type="evidence" value="ECO:0007669"/>
    <property type="project" value="UniProtKB-UniRule"/>
</dbReference>
<dbReference type="GO" id="GO:0006412">
    <property type="term" value="P:translation"/>
    <property type="evidence" value="ECO:0007669"/>
    <property type="project" value="UniProtKB-UniRule"/>
</dbReference>
<dbReference type="CDD" id="cd03368">
    <property type="entry name" value="Ribosomal_S12"/>
    <property type="match status" value="1"/>
</dbReference>
<dbReference type="FunFam" id="2.40.50.140:FF:000001">
    <property type="entry name" value="30S ribosomal protein S12"/>
    <property type="match status" value="1"/>
</dbReference>
<dbReference type="Gene3D" id="2.40.50.140">
    <property type="entry name" value="Nucleic acid-binding proteins"/>
    <property type="match status" value="1"/>
</dbReference>
<dbReference type="HAMAP" id="MF_00403_B">
    <property type="entry name" value="Ribosomal_uS12_B"/>
    <property type="match status" value="1"/>
</dbReference>
<dbReference type="InterPro" id="IPR012340">
    <property type="entry name" value="NA-bd_OB-fold"/>
</dbReference>
<dbReference type="InterPro" id="IPR006032">
    <property type="entry name" value="Ribosomal_uS12"/>
</dbReference>
<dbReference type="InterPro" id="IPR005679">
    <property type="entry name" value="Ribosomal_uS12_bac"/>
</dbReference>
<dbReference type="NCBIfam" id="TIGR00981">
    <property type="entry name" value="rpsL_bact"/>
    <property type="match status" value="1"/>
</dbReference>
<dbReference type="PANTHER" id="PTHR11652">
    <property type="entry name" value="30S RIBOSOMAL PROTEIN S12 FAMILY MEMBER"/>
    <property type="match status" value="1"/>
</dbReference>
<dbReference type="Pfam" id="PF00164">
    <property type="entry name" value="Ribosom_S12_S23"/>
    <property type="match status" value="1"/>
</dbReference>
<dbReference type="PIRSF" id="PIRSF002133">
    <property type="entry name" value="Ribosomal_S12/S23"/>
    <property type="match status" value="1"/>
</dbReference>
<dbReference type="PRINTS" id="PR01034">
    <property type="entry name" value="RIBOSOMALS12"/>
</dbReference>
<dbReference type="SUPFAM" id="SSF50249">
    <property type="entry name" value="Nucleic acid-binding proteins"/>
    <property type="match status" value="1"/>
</dbReference>
<dbReference type="PROSITE" id="PS00055">
    <property type="entry name" value="RIBOSOMAL_S12"/>
    <property type="match status" value="1"/>
</dbReference>
<reference key="1">
    <citation type="journal article" date="2011" name="PLoS Genet.">
        <title>The evolution of host specialization in the vertebrate gut symbiont Lactobacillus reuteri.</title>
        <authorList>
            <person name="Frese S.A."/>
            <person name="Benson A.K."/>
            <person name="Tannock G.W."/>
            <person name="Loach D.M."/>
            <person name="Kim J."/>
            <person name="Zhang M."/>
            <person name="Oh P.L."/>
            <person name="Heng N.C."/>
            <person name="Patil P.B."/>
            <person name="Juge N."/>
            <person name="Mackenzie D.A."/>
            <person name="Pearson B.M."/>
            <person name="Lapidus A."/>
            <person name="Dalin E."/>
            <person name="Tice H."/>
            <person name="Goltsman E."/>
            <person name="Land M."/>
            <person name="Hauser L."/>
            <person name="Ivanova N."/>
            <person name="Kyrpides N.C."/>
            <person name="Walter J."/>
        </authorList>
    </citation>
    <scope>NUCLEOTIDE SEQUENCE [LARGE SCALE GENOMIC DNA]</scope>
    <source>
        <strain>DSM 20016</strain>
    </source>
</reference>
<protein>
    <recommendedName>
        <fullName evidence="2">Small ribosomal subunit protein uS12</fullName>
    </recommendedName>
    <alternativeName>
        <fullName evidence="4">30S ribosomal protein S12</fullName>
    </alternativeName>
</protein>
<keyword id="KW-0488">Methylation</keyword>
<keyword id="KW-1185">Reference proteome</keyword>
<keyword id="KW-0687">Ribonucleoprotein</keyword>
<keyword id="KW-0689">Ribosomal protein</keyword>
<keyword id="KW-0694">RNA-binding</keyword>
<keyword id="KW-0699">rRNA-binding</keyword>
<keyword id="KW-0820">tRNA-binding</keyword>
<sequence length="139" mass="15503">MPTINQLVRKGRKSHKGKSKSPALGYVYNTFKKEEIKTPSPQKRGVATRVGTMTPKKPNSALRKYARVRLSNLIEVTAYIPGIGHNLQEHSVVLIRGGRVKDLPGVRYHIIRGTLDTAGVEGRMQSRSKYGAKKPKNKK</sequence>
<evidence type="ECO:0000250" key="1"/>
<evidence type="ECO:0000255" key="2">
    <source>
        <dbReference type="HAMAP-Rule" id="MF_00403"/>
    </source>
</evidence>
<evidence type="ECO:0000256" key="3">
    <source>
        <dbReference type="SAM" id="MobiDB-lite"/>
    </source>
</evidence>
<evidence type="ECO:0000305" key="4"/>
<feature type="chain" id="PRO_1000060816" description="Small ribosomal subunit protein uS12">
    <location>
        <begin position="1"/>
        <end position="139"/>
    </location>
</feature>
<feature type="region of interest" description="Disordered" evidence="3">
    <location>
        <begin position="1"/>
        <end position="22"/>
    </location>
</feature>
<feature type="region of interest" description="Disordered" evidence="3">
    <location>
        <begin position="37"/>
        <end position="57"/>
    </location>
</feature>
<feature type="compositionally biased region" description="Basic residues" evidence="3">
    <location>
        <begin position="9"/>
        <end position="19"/>
    </location>
</feature>
<feature type="modified residue" description="3-methylthioaspartic acid" evidence="1">
    <location>
        <position position="102"/>
    </location>
</feature>
<comment type="function">
    <text evidence="2">With S4 and S5 plays an important role in translational accuracy.</text>
</comment>
<comment type="function">
    <text evidence="2">Interacts with and stabilizes bases of the 16S rRNA that are involved in tRNA selection in the A site and with the mRNA backbone. Located at the interface of the 30S and 50S subunits, it traverses the body of the 30S subunit contacting proteins on the other side and probably holding the rRNA structure together. The combined cluster of proteins S8, S12 and S17 appears to hold together the shoulder and platform of the 30S subunit.</text>
</comment>
<comment type="subunit">
    <text evidence="2">Part of the 30S ribosomal subunit. Contacts proteins S8 and S17. May interact with IF1 in the 30S initiation complex.</text>
</comment>
<comment type="similarity">
    <text evidence="2">Belongs to the universal ribosomal protein uS12 family.</text>
</comment>
<name>RS12_LIMRD</name>
<organism>
    <name type="scientific">Limosilactobacillus reuteri (strain DSM 20016)</name>
    <name type="common">Lactobacillus reuteri</name>
    <dbReference type="NCBI Taxonomy" id="557436"/>
    <lineage>
        <taxon>Bacteria</taxon>
        <taxon>Bacillati</taxon>
        <taxon>Bacillota</taxon>
        <taxon>Bacilli</taxon>
        <taxon>Lactobacillales</taxon>
        <taxon>Lactobacillaceae</taxon>
        <taxon>Limosilactobacillus</taxon>
    </lineage>
</organism>